<comment type="similarity">
    <text evidence="1">Belongs to the universal ribosomal protein uL29 family.</text>
</comment>
<sequence length="66" mass="7729">MKANEIRDLTTAEIEQKVKSLKEELFNLRFQLATGQLENTARIREVRKSIARMKTVIREREIAANK</sequence>
<evidence type="ECO:0000255" key="1">
    <source>
        <dbReference type="HAMAP-Rule" id="MF_00374"/>
    </source>
</evidence>
<evidence type="ECO:0000305" key="2"/>
<protein>
    <recommendedName>
        <fullName evidence="1">Large ribosomal subunit protein uL29</fullName>
    </recommendedName>
    <alternativeName>
        <fullName evidence="2">50S ribosomal protein L29</fullName>
    </alternativeName>
</protein>
<accession>Q65P99</accession>
<accession>Q62ZN8</accession>
<gene>
    <name evidence="1" type="primary">rpmC</name>
    <name type="ordered locus">BLi00141</name>
    <name type="ordered locus">BL01043</name>
</gene>
<feature type="chain" id="PRO_1000007418" description="Large ribosomal subunit protein uL29">
    <location>
        <begin position="1"/>
        <end position="66"/>
    </location>
</feature>
<organism>
    <name type="scientific">Bacillus licheniformis (strain ATCC 14580 / DSM 13 / JCM 2505 / CCUG 7422 / NBRC 12200 / NCIMB 9375 / NCTC 10341 / NRRL NRS-1264 / Gibson 46)</name>
    <dbReference type="NCBI Taxonomy" id="279010"/>
    <lineage>
        <taxon>Bacteria</taxon>
        <taxon>Bacillati</taxon>
        <taxon>Bacillota</taxon>
        <taxon>Bacilli</taxon>
        <taxon>Bacillales</taxon>
        <taxon>Bacillaceae</taxon>
        <taxon>Bacillus</taxon>
    </lineage>
</organism>
<name>RL29_BACLD</name>
<keyword id="KW-1185">Reference proteome</keyword>
<keyword id="KW-0687">Ribonucleoprotein</keyword>
<keyword id="KW-0689">Ribosomal protein</keyword>
<reference key="1">
    <citation type="journal article" date="2004" name="J. Mol. Microbiol. Biotechnol.">
        <title>The complete genome sequence of Bacillus licheniformis DSM13, an organism with great industrial potential.</title>
        <authorList>
            <person name="Veith B."/>
            <person name="Herzberg C."/>
            <person name="Steckel S."/>
            <person name="Feesche J."/>
            <person name="Maurer K.H."/>
            <person name="Ehrenreich P."/>
            <person name="Baeumer S."/>
            <person name="Henne A."/>
            <person name="Liesegang H."/>
            <person name="Merkl R."/>
            <person name="Ehrenreich A."/>
            <person name="Gottschalk G."/>
        </authorList>
    </citation>
    <scope>NUCLEOTIDE SEQUENCE [LARGE SCALE GENOMIC DNA]</scope>
    <source>
        <strain>ATCC 14580 / DSM 13 / JCM 2505 / CCUG 7422 / NBRC 12200 / NCIMB 9375 / NCTC 10341 / NRRL NRS-1264 / Gibson 46</strain>
    </source>
</reference>
<reference key="2">
    <citation type="journal article" date="2004" name="Genome Biol.">
        <title>Complete genome sequence of the industrial bacterium Bacillus licheniformis and comparisons with closely related Bacillus species.</title>
        <authorList>
            <person name="Rey M.W."/>
            <person name="Ramaiya P."/>
            <person name="Nelson B.A."/>
            <person name="Brody-Karpin S.D."/>
            <person name="Zaretsky E.J."/>
            <person name="Tang M."/>
            <person name="Lopez de Leon A."/>
            <person name="Xiang H."/>
            <person name="Gusti V."/>
            <person name="Clausen I.G."/>
            <person name="Olsen P.B."/>
            <person name="Rasmussen M.D."/>
            <person name="Andersen J.T."/>
            <person name="Joergensen P.L."/>
            <person name="Larsen T.S."/>
            <person name="Sorokin A."/>
            <person name="Bolotin A."/>
            <person name="Lapidus A."/>
            <person name="Galleron N."/>
            <person name="Ehrlich S.D."/>
            <person name="Berka R.M."/>
        </authorList>
    </citation>
    <scope>NUCLEOTIDE SEQUENCE [LARGE SCALE GENOMIC DNA]</scope>
    <source>
        <strain>ATCC 14580 / DSM 13 / JCM 2505 / CCUG 7422 / NBRC 12200 / NCIMB 9375 / NCTC 10341 / NRRL NRS-1264 / Gibson 46</strain>
    </source>
</reference>
<dbReference type="EMBL" id="CP000002">
    <property type="protein sequence ID" value="AAU21770.2"/>
    <property type="molecule type" value="Genomic_DNA"/>
</dbReference>
<dbReference type="EMBL" id="AE017333">
    <property type="protein sequence ID" value="AAU39115.1"/>
    <property type="molecule type" value="Genomic_DNA"/>
</dbReference>
<dbReference type="RefSeq" id="WP_003178343.1">
    <property type="nucleotide sequence ID" value="NC_006322.1"/>
</dbReference>
<dbReference type="SMR" id="Q65P99"/>
<dbReference type="STRING" id="279010.BL01043"/>
<dbReference type="GeneID" id="92858895"/>
<dbReference type="KEGG" id="bld:BLi00141"/>
<dbReference type="KEGG" id="bli:BL01043"/>
<dbReference type="eggNOG" id="COG0255">
    <property type="taxonomic scope" value="Bacteria"/>
</dbReference>
<dbReference type="HOGENOM" id="CLU_158491_5_2_9"/>
<dbReference type="Proteomes" id="UP000000606">
    <property type="component" value="Chromosome"/>
</dbReference>
<dbReference type="GO" id="GO:0022625">
    <property type="term" value="C:cytosolic large ribosomal subunit"/>
    <property type="evidence" value="ECO:0007669"/>
    <property type="project" value="TreeGrafter"/>
</dbReference>
<dbReference type="GO" id="GO:0003735">
    <property type="term" value="F:structural constituent of ribosome"/>
    <property type="evidence" value="ECO:0007669"/>
    <property type="project" value="InterPro"/>
</dbReference>
<dbReference type="GO" id="GO:0006412">
    <property type="term" value="P:translation"/>
    <property type="evidence" value="ECO:0007669"/>
    <property type="project" value="UniProtKB-UniRule"/>
</dbReference>
<dbReference type="CDD" id="cd00427">
    <property type="entry name" value="Ribosomal_L29_HIP"/>
    <property type="match status" value="1"/>
</dbReference>
<dbReference type="FunFam" id="1.10.287.310:FF:000001">
    <property type="entry name" value="50S ribosomal protein L29"/>
    <property type="match status" value="1"/>
</dbReference>
<dbReference type="Gene3D" id="1.10.287.310">
    <property type="match status" value="1"/>
</dbReference>
<dbReference type="HAMAP" id="MF_00374">
    <property type="entry name" value="Ribosomal_uL29"/>
    <property type="match status" value="1"/>
</dbReference>
<dbReference type="InterPro" id="IPR050063">
    <property type="entry name" value="Ribosomal_protein_uL29"/>
</dbReference>
<dbReference type="InterPro" id="IPR001854">
    <property type="entry name" value="Ribosomal_uL29"/>
</dbReference>
<dbReference type="InterPro" id="IPR018254">
    <property type="entry name" value="Ribosomal_uL29_CS"/>
</dbReference>
<dbReference type="InterPro" id="IPR036049">
    <property type="entry name" value="Ribosomal_uL29_sf"/>
</dbReference>
<dbReference type="NCBIfam" id="TIGR00012">
    <property type="entry name" value="L29"/>
    <property type="match status" value="1"/>
</dbReference>
<dbReference type="PANTHER" id="PTHR10916">
    <property type="entry name" value="60S RIBOSOMAL PROTEIN L35/50S RIBOSOMAL PROTEIN L29"/>
    <property type="match status" value="1"/>
</dbReference>
<dbReference type="PANTHER" id="PTHR10916:SF0">
    <property type="entry name" value="LARGE RIBOSOMAL SUBUNIT PROTEIN UL29C"/>
    <property type="match status" value="1"/>
</dbReference>
<dbReference type="Pfam" id="PF00831">
    <property type="entry name" value="Ribosomal_L29"/>
    <property type="match status" value="1"/>
</dbReference>
<dbReference type="SUPFAM" id="SSF46561">
    <property type="entry name" value="Ribosomal protein L29 (L29p)"/>
    <property type="match status" value="1"/>
</dbReference>
<dbReference type="PROSITE" id="PS00579">
    <property type="entry name" value="RIBOSOMAL_L29"/>
    <property type="match status" value="1"/>
</dbReference>
<proteinExistence type="inferred from homology"/>